<keyword id="KW-0997">Cell inner membrane</keyword>
<keyword id="KW-1003">Cell membrane</keyword>
<keyword id="KW-0963">Cytoplasm</keyword>
<keyword id="KW-0342">GTP-binding</keyword>
<keyword id="KW-0472">Membrane</keyword>
<keyword id="KW-0547">Nucleotide-binding</keyword>
<keyword id="KW-0690">Ribosome biogenesis</keyword>
<keyword id="KW-0694">RNA-binding</keyword>
<keyword id="KW-0699">rRNA-binding</keyword>
<gene>
    <name evidence="1" type="primary">era</name>
    <name type="ordered locus">SeSA_A2823</name>
</gene>
<evidence type="ECO:0000255" key="1">
    <source>
        <dbReference type="HAMAP-Rule" id="MF_00367"/>
    </source>
</evidence>
<evidence type="ECO:0000255" key="2">
    <source>
        <dbReference type="PROSITE-ProRule" id="PRU01050"/>
    </source>
</evidence>
<organism>
    <name type="scientific">Salmonella schwarzengrund (strain CVM19633)</name>
    <dbReference type="NCBI Taxonomy" id="439843"/>
    <lineage>
        <taxon>Bacteria</taxon>
        <taxon>Pseudomonadati</taxon>
        <taxon>Pseudomonadota</taxon>
        <taxon>Gammaproteobacteria</taxon>
        <taxon>Enterobacterales</taxon>
        <taxon>Enterobacteriaceae</taxon>
        <taxon>Salmonella</taxon>
    </lineage>
</organism>
<comment type="function">
    <text evidence="1">An essential GTPase that binds both GDP and GTP, with rapid nucleotide exchange. Plays a role in 16S rRNA processing and 30S ribosomal subunit biogenesis and possibly also in cell cycle regulation and energy metabolism.</text>
</comment>
<comment type="subunit">
    <text evidence="1">Monomer.</text>
</comment>
<comment type="subcellular location">
    <subcellularLocation>
        <location>Cytoplasm</location>
    </subcellularLocation>
    <subcellularLocation>
        <location evidence="1">Cell inner membrane</location>
        <topology evidence="1">Peripheral membrane protein</topology>
    </subcellularLocation>
</comment>
<comment type="similarity">
    <text evidence="1 2">Belongs to the TRAFAC class TrmE-Era-EngA-EngB-Septin-like GTPase superfamily. Era GTPase family.</text>
</comment>
<name>ERA_SALSV</name>
<accession>B4TS13</accession>
<proteinExistence type="inferred from homology"/>
<dbReference type="EMBL" id="CP001127">
    <property type="protein sequence ID" value="ACF92115.1"/>
    <property type="molecule type" value="Genomic_DNA"/>
</dbReference>
<dbReference type="RefSeq" id="WP_000102230.1">
    <property type="nucleotide sequence ID" value="NC_011094.1"/>
</dbReference>
<dbReference type="SMR" id="B4TS13"/>
<dbReference type="KEGG" id="sew:SeSA_A2823"/>
<dbReference type="HOGENOM" id="CLU_038009_1_2_6"/>
<dbReference type="Proteomes" id="UP000001865">
    <property type="component" value="Chromosome"/>
</dbReference>
<dbReference type="GO" id="GO:0005829">
    <property type="term" value="C:cytosol"/>
    <property type="evidence" value="ECO:0007669"/>
    <property type="project" value="TreeGrafter"/>
</dbReference>
<dbReference type="GO" id="GO:0005886">
    <property type="term" value="C:plasma membrane"/>
    <property type="evidence" value="ECO:0007669"/>
    <property type="project" value="UniProtKB-SubCell"/>
</dbReference>
<dbReference type="GO" id="GO:0005525">
    <property type="term" value="F:GTP binding"/>
    <property type="evidence" value="ECO:0007669"/>
    <property type="project" value="UniProtKB-UniRule"/>
</dbReference>
<dbReference type="GO" id="GO:0003924">
    <property type="term" value="F:GTPase activity"/>
    <property type="evidence" value="ECO:0007669"/>
    <property type="project" value="UniProtKB-UniRule"/>
</dbReference>
<dbReference type="GO" id="GO:0043024">
    <property type="term" value="F:ribosomal small subunit binding"/>
    <property type="evidence" value="ECO:0007669"/>
    <property type="project" value="TreeGrafter"/>
</dbReference>
<dbReference type="GO" id="GO:0070181">
    <property type="term" value="F:small ribosomal subunit rRNA binding"/>
    <property type="evidence" value="ECO:0007669"/>
    <property type="project" value="UniProtKB-UniRule"/>
</dbReference>
<dbReference type="GO" id="GO:0000028">
    <property type="term" value="P:ribosomal small subunit assembly"/>
    <property type="evidence" value="ECO:0007669"/>
    <property type="project" value="TreeGrafter"/>
</dbReference>
<dbReference type="CDD" id="cd04163">
    <property type="entry name" value="Era"/>
    <property type="match status" value="1"/>
</dbReference>
<dbReference type="CDD" id="cd22534">
    <property type="entry name" value="KH-II_Era"/>
    <property type="match status" value="1"/>
</dbReference>
<dbReference type="FunFam" id="3.30.300.20:FF:000003">
    <property type="entry name" value="GTPase Era"/>
    <property type="match status" value="1"/>
</dbReference>
<dbReference type="FunFam" id="3.40.50.300:FF:000094">
    <property type="entry name" value="GTPase Era"/>
    <property type="match status" value="1"/>
</dbReference>
<dbReference type="Gene3D" id="3.30.300.20">
    <property type="match status" value="1"/>
</dbReference>
<dbReference type="Gene3D" id="3.40.50.300">
    <property type="entry name" value="P-loop containing nucleotide triphosphate hydrolases"/>
    <property type="match status" value="1"/>
</dbReference>
<dbReference type="HAMAP" id="MF_00367">
    <property type="entry name" value="GTPase_Era"/>
    <property type="match status" value="1"/>
</dbReference>
<dbReference type="InterPro" id="IPR030388">
    <property type="entry name" value="G_ERA_dom"/>
</dbReference>
<dbReference type="InterPro" id="IPR006073">
    <property type="entry name" value="GTP-bd"/>
</dbReference>
<dbReference type="InterPro" id="IPR005662">
    <property type="entry name" value="GTPase_Era-like"/>
</dbReference>
<dbReference type="InterPro" id="IPR015946">
    <property type="entry name" value="KH_dom-like_a/b"/>
</dbReference>
<dbReference type="InterPro" id="IPR004044">
    <property type="entry name" value="KH_dom_type_2"/>
</dbReference>
<dbReference type="InterPro" id="IPR009019">
    <property type="entry name" value="KH_sf_prok-type"/>
</dbReference>
<dbReference type="InterPro" id="IPR027417">
    <property type="entry name" value="P-loop_NTPase"/>
</dbReference>
<dbReference type="InterPro" id="IPR005225">
    <property type="entry name" value="Small_GTP-bd"/>
</dbReference>
<dbReference type="NCBIfam" id="TIGR00436">
    <property type="entry name" value="era"/>
    <property type="match status" value="1"/>
</dbReference>
<dbReference type="NCBIfam" id="NF000908">
    <property type="entry name" value="PRK00089.1"/>
    <property type="match status" value="1"/>
</dbReference>
<dbReference type="NCBIfam" id="TIGR00231">
    <property type="entry name" value="small_GTP"/>
    <property type="match status" value="1"/>
</dbReference>
<dbReference type="PANTHER" id="PTHR42698">
    <property type="entry name" value="GTPASE ERA"/>
    <property type="match status" value="1"/>
</dbReference>
<dbReference type="PANTHER" id="PTHR42698:SF1">
    <property type="entry name" value="GTPASE ERA, MITOCHONDRIAL"/>
    <property type="match status" value="1"/>
</dbReference>
<dbReference type="Pfam" id="PF07650">
    <property type="entry name" value="KH_2"/>
    <property type="match status" value="1"/>
</dbReference>
<dbReference type="Pfam" id="PF01926">
    <property type="entry name" value="MMR_HSR1"/>
    <property type="match status" value="1"/>
</dbReference>
<dbReference type="SUPFAM" id="SSF52540">
    <property type="entry name" value="P-loop containing nucleoside triphosphate hydrolases"/>
    <property type="match status" value="1"/>
</dbReference>
<dbReference type="SUPFAM" id="SSF54814">
    <property type="entry name" value="Prokaryotic type KH domain (KH-domain type II)"/>
    <property type="match status" value="1"/>
</dbReference>
<dbReference type="PROSITE" id="PS51713">
    <property type="entry name" value="G_ERA"/>
    <property type="match status" value="1"/>
</dbReference>
<dbReference type="PROSITE" id="PS50823">
    <property type="entry name" value="KH_TYPE_2"/>
    <property type="match status" value="1"/>
</dbReference>
<sequence length="301" mass="33854">MSTDKTYCGFIAIVGRPNVGKSTLLNKLLGQKISITSRKAQTTRHRIVGIHTEGPYQAIYVDTPGLHMEEKRAINRLMNKAASSSIGDVELVIFVVEGTRWTPDDEMVLNKLRDGKAPVILAVNKVDNVQEKADLLPHLQFLASQMNFLDIVPISAETGMNVDTIAGIVRKHLPEAIHHFPEDYITDRSQRFMASEIIREKLMRFLGAELPYSVTVEIERFVTNERGGYDINGLILVEREGQKKMVIGNKGAKIKTIGIEARKDMQEMFEAPVHLELWVKVKSGWADDERALRSLGYVDDL</sequence>
<reference key="1">
    <citation type="journal article" date="2011" name="J. Bacteriol.">
        <title>Comparative genomics of 28 Salmonella enterica isolates: evidence for CRISPR-mediated adaptive sublineage evolution.</title>
        <authorList>
            <person name="Fricke W.F."/>
            <person name="Mammel M.K."/>
            <person name="McDermott P.F."/>
            <person name="Tartera C."/>
            <person name="White D.G."/>
            <person name="Leclerc J.E."/>
            <person name="Ravel J."/>
            <person name="Cebula T.A."/>
        </authorList>
    </citation>
    <scope>NUCLEOTIDE SEQUENCE [LARGE SCALE GENOMIC DNA]</scope>
    <source>
        <strain>CVM19633</strain>
    </source>
</reference>
<protein>
    <recommendedName>
        <fullName evidence="1">GTPase Era</fullName>
    </recommendedName>
</protein>
<feature type="chain" id="PRO_1000121354" description="GTPase Era">
    <location>
        <begin position="1"/>
        <end position="301"/>
    </location>
</feature>
<feature type="domain" description="Era-type G" evidence="2">
    <location>
        <begin position="7"/>
        <end position="175"/>
    </location>
</feature>
<feature type="domain" description="KH type-2" evidence="1">
    <location>
        <begin position="206"/>
        <end position="283"/>
    </location>
</feature>
<feature type="region of interest" description="G1" evidence="2">
    <location>
        <begin position="15"/>
        <end position="22"/>
    </location>
</feature>
<feature type="region of interest" description="G2" evidence="2">
    <location>
        <begin position="41"/>
        <end position="45"/>
    </location>
</feature>
<feature type="region of interest" description="G3" evidence="2">
    <location>
        <begin position="62"/>
        <end position="65"/>
    </location>
</feature>
<feature type="region of interest" description="G4" evidence="2">
    <location>
        <begin position="124"/>
        <end position="127"/>
    </location>
</feature>
<feature type="region of interest" description="G5" evidence="2">
    <location>
        <begin position="154"/>
        <end position="156"/>
    </location>
</feature>
<feature type="binding site" evidence="1">
    <location>
        <begin position="15"/>
        <end position="22"/>
    </location>
    <ligand>
        <name>GTP</name>
        <dbReference type="ChEBI" id="CHEBI:37565"/>
    </ligand>
</feature>
<feature type="binding site" evidence="1">
    <location>
        <begin position="62"/>
        <end position="66"/>
    </location>
    <ligand>
        <name>GTP</name>
        <dbReference type="ChEBI" id="CHEBI:37565"/>
    </ligand>
</feature>
<feature type="binding site" evidence="1">
    <location>
        <begin position="124"/>
        <end position="127"/>
    </location>
    <ligand>
        <name>GTP</name>
        <dbReference type="ChEBI" id="CHEBI:37565"/>
    </ligand>
</feature>